<accession>B2S758</accession>
<name>PDHS_BRUA1</name>
<comment type="function">
    <text evidence="1">Functions as a polar differentiation marker. Essential protein that, by localizing in the old pole of dividing cells, controls cell division and maturation, probably through control of DivK phosphorylation status and cellular distribution, which in turn regulates CtrA, a transcriptional regulator of the minB operon. The asymmetrical localization of this protein is probably required for cells to enter a new division cycle (By similarity).</text>
</comment>
<comment type="catalytic activity">
    <reaction>
        <text>ATP + protein L-histidine = ADP + protein N-phospho-L-histidine.</text>
        <dbReference type="EC" id="2.7.13.3"/>
    </reaction>
</comment>
<comment type="subunit">
    <text evidence="1">Interacts with DivK.</text>
</comment>
<comment type="subcellular location">
    <subcellularLocation>
        <location evidence="1">Cytoplasm</location>
    </subcellularLocation>
    <text evidence="1">Localizes at the old pole of dividing cells. Colocalizes with DivK (By similarity).</text>
</comment>
<keyword id="KW-0067">ATP-binding</keyword>
<keyword id="KW-0131">Cell cycle</keyword>
<keyword id="KW-0132">Cell division</keyword>
<keyword id="KW-0963">Cytoplasm</keyword>
<keyword id="KW-0418">Kinase</keyword>
<keyword id="KW-0547">Nucleotide-binding</keyword>
<keyword id="KW-0597">Phosphoprotein</keyword>
<keyword id="KW-0808">Transferase</keyword>
<organism>
    <name type="scientific">Brucella abortus (strain S19)</name>
    <dbReference type="NCBI Taxonomy" id="430066"/>
    <lineage>
        <taxon>Bacteria</taxon>
        <taxon>Pseudomonadati</taxon>
        <taxon>Pseudomonadota</taxon>
        <taxon>Alphaproteobacteria</taxon>
        <taxon>Hyphomicrobiales</taxon>
        <taxon>Brucellaceae</taxon>
        <taxon>Brucella/Ochrobactrum group</taxon>
        <taxon>Brucella</taxon>
    </lineage>
</organism>
<evidence type="ECO:0000250" key="1"/>
<evidence type="ECO:0000255" key="2">
    <source>
        <dbReference type="PROSITE-ProRule" id="PRU00107"/>
    </source>
</evidence>
<evidence type="ECO:0000255" key="3">
    <source>
        <dbReference type="PROSITE-ProRule" id="PRU00140"/>
    </source>
</evidence>
<evidence type="ECO:0000256" key="4">
    <source>
        <dbReference type="SAM" id="MobiDB-lite"/>
    </source>
</evidence>
<dbReference type="EC" id="2.7.13.3"/>
<dbReference type="EMBL" id="CP000887">
    <property type="protein sequence ID" value="ACD73005.1"/>
    <property type="molecule type" value="Genomic_DNA"/>
</dbReference>
<dbReference type="RefSeq" id="WP_002966929.1">
    <property type="nucleotide sequence ID" value="NC_010742.1"/>
</dbReference>
<dbReference type="SMR" id="B2S758"/>
<dbReference type="GeneID" id="93016129"/>
<dbReference type="KEGG" id="bmc:BAbS19_I15150"/>
<dbReference type="HOGENOM" id="CLU_000445_23_0_5"/>
<dbReference type="Proteomes" id="UP000002565">
    <property type="component" value="Chromosome 1"/>
</dbReference>
<dbReference type="GO" id="GO:0005737">
    <property type="term" value="C:cytoplasm"/>
    <property type="evidence" value="ECO:0007669"/>
    <property type="project" value="UniProtKB-SubCell"/>
</dbReference>
<dbReference type="GO" id="GO:0005886">
    <property type="term" value="C:plasma membrane"/>
    <property type="evidence" value="ECO:0007669"/>
    <property type="project" value="TreeGrafter"/>
</dbReference>
<dbReference type="GO" id="GO:0005524">
    <property type="term" value="F:ATP binding"/>
    <property type="evidence" value="ECO:0007669"/>
    <property type="project" value="UniProtKB-KW"/>
</dbReference>
<dbReference type="GO" id="GO:0009927">
    <property type="term" value="F:histidine phosphotransfer kinase activity"/>
    <property type="evidence" value="ECO:0007669"/>
    <property type="project" value="TreeGrafter"/>
</dbReference>
<dbReference type="GO" id="GO:0000155">
    <property type="term" value="F:phosphorelay sensor kinase activity"/>
    <property type="evidence" value="ECO:0007669"/>
    <property type="project" value="InterPro"/>
</dbReference>
<dbReference type="GO" id="GO:0051301">
    <property type="term" value="P:cell division"/>
    <property type="evidence" value="ECO:0007669"/>
    <property type="project" value="UniProtKB-KW"/>
</dbReference>
<dbReference type="GO" id="GO:0006355">
    <property type="term" value="P:regulation of DNA-templated transcription"/>
    <property type="evidence" value="ECO:0007669"/>
    <property type="project" value="InterPro"/>
</dbReference>
<dbReference type="CDD" id="cd00082">
    <property type="entry name" value="HisKA"/>
    <property type="match status" value="1"/>
</dbReference>
<dbReference type="CDD" id="cd00130">
    <property type="entry name" value="PAS"/>
    <property type="match status" value="1"/>
</dbReference>
<dbReference type="Gene3D" id="1.10.287.130">
    <property type="match status" value="1"/>
</dbReference>
<dbReference type="Gene3D" id="3.30.565.10">
    <property type="entry name" value="Histidine kinase-like ATPase, C-terminal domain"/>
    <property type="match status" value="1"/>
</dbReference>
<dbReference type="Gene3D" id="3.30.450.20">
    <property type="entry name" value="PAS domain"/>
    <property type="match status" value="1"/>
</dbReference>
<dbReference type="InterPro" id="IPR036890">
    <property type="entry name" value="HATPase_C_sf"/>
</dbReference>
<dbReference type="InterPro" id="IPR005467">
    <property type="entry name" value="His_kinase_dom"/>
</dbReference>
<dbReference type="InterPro" id="IPR003661">
    <property type="entry name" value="HisK_dim/P_dom"/>
</dbReference>
<dbReference type="InterPro" id="IPR036097">
    <property type="entry name" value="HisK_dim/P_sf"/>
</dbReference>
<dbReference type="InterPro" id="IPR000014">
    <property type="entry name" value="PAS"/>
</dbReference>
<dbReference type="InterPro" id="IPR035965">
    <property type="entry name" value="PAS-like_dom_sf"/>
</dbReference>
<dbReference type="InterPro" id="IPR013767">
    <property type="entry name" value="PAS_fold"/>
</dbReference>
<dbReference type="InterPro" id="IPR048231">
    <property type="entry name" value="PdhS_histid_kinase"/>
</dbReference>
<dbReference type="InterPro" id="IPR004358">
    <property type="entry name" value="Sig_transdc_His_kin-like_C"/>
</dbReference>
<dbReference type="NCBIfam" id="NF041593">
    <property type="entry name" value="histid_kinase_PdhS"/>
    <property type="match status" value="1"/>
</dbReference>
<dbReference type="NCBIfam" id="TIGR00229">
    <property type="entry name" value="sensory_box"/>
    <property type="match status" value="1"/>
</dbReference>
<dbReference type="PANTHER" id="PTHR43047:SF72">
    <property type="entry name" value="OSMOSENSING HISTIDINE PROTEIN KINASE SLN1"/>
    <property type="match status" value="1"/>
</dbReference>
<dbReference type="PANTHER" id="PTHR43047">
    <property type="entry name" value="TWO-COMPONENT HISTIDINE PROTEIN KINASE"/>
    <property type="match status" value="1"/>
</dbReference>
<dbReference type="Pfam" id="PF02518">
    <property type="entry name" value="HATPase_c"/>
    <property type="match status" value="1"/>
</dbReference>
<dbReference type="Pfam" id="PF00512">
    <property type="entry name" value="HisKA"/>
    <property type="match status" value="1"/>
</dbReference>
<dbReference type="Pfam" id="PF00989">
    <property type="entry name" value="PAS"/>
    <property type="match status" value="1"/>
</dbReference>
<dbReference type="Pfam" id="PF13188">
    <property type="entry name" value="PAS_8"/>
    <property type="match status" value="1"/>
</dbReference>
<dbReference type="PRINTS" id="PR00344">
    <property type="entry name" value="BCTRLSENSOR"/>
</dbReference>
<dbReference type="SMART" id="SM00387">
    <property type="entry name" value="HATPase_c"/>
    <property type="match status" value="1"/>
</dbReference>
<dbReference type="SMART" id="SM00388">
    <property type="entry name" value="HisKA"/>
    <property type="match status" value="1"/>
</dbReference>
<dbReference type="SMART" id="SM00091">
    <property type="entry name" value="PAS"/>
    <property type="match status" value="2"/>
</dbReference>
<dbReference type="SUPFAM" id="SSF55874">
    <property type="entry name" value="ATPase domain of HSP90 chaperone/DNA topoisomerase II/histidine kinase"/>
    <property type="match status" value="1"/>
</dbReference>
<dbReference type="SUPFAM" id="SSF47384">
    <property type="entry name" value="Homodimeric domain of signal transducing histidine kinase"/>
    <property type="match status" value="1"/>
</dbReference>
<dbReference type="SUPFAM" id="SSF55785">
    <property type="entry name" value="PYP-like sensor domain (PAS domain)"/>
    <property type="match status" value="1"/>
</dbReference>
<dbReference type="PROSITE" id="PS50109">
    <property type="entry name" value="HIS_KIN"/>
    <property type="match status" value="1"/>
</dbReference>
<dbReference type="PROSITE" id="PS50112">
    <property type="entry name" value="PAS"/>
    <property type="match status" value="1"/>
</dbReference>
<protein>
    <recommendedName>
        <fullName>Cell-division control histidine kinase PdhS</fullName>
        <ecNumber>2.7.13.3</ecNumber>
    </recommendedName>
</protein>
<proteinExistence type="inferred from homology"/>
<reference key="1">
    <citation type="journal article" date="2008" name="PLoS ONE">
        <title>Genome sequence of Brucella abortus vaccine strain S19 compared to virulent strains yields candidate virulence genes.</title>
        <authorList>
            <person name="Crasta O.R."/>
            <person name="Folkerts O."/>
            <person name="Fei Z."/>
            <person name="Mane S.P."/>
            <person name="Evans C."/>
            <person name="Martino-Catt S."/>
            <person name="Bricker B."/>
            <person name="Yu G."/>
            <person name="Du L."/>
            <person name="Sobral B.W."/>
        </authorList>
    </citation>
    <scope>NUCLEOTIDE SEQUENCE [LARGE SCALE GENOMIC DNA]</scope>
    <source>
        <strain>S19</strain>
    </source>
</reference>
<gene>
    <name type="primary">pdhS</name>
    <name type="ordered locus">BAbS19_I15150</name>
</gene>
<sequence length="1035" mass="111804">MSGSYPFIDIAALDSVREGFARGDAQLVLAHDLSTVLWVNGPGAKLFGYNRVEDLIEGQLDLPVATRRQIAAFSSENTSAPSAVAVRLGGGLRSELTHLHVSNIKLPDGVAALLVATQMPDNSAEAAISGLGDDSTHIALVDAVGKVVAASPRFALLDISASTLEDLIVEAGDATDRIVKRRIRTGSHSVPGAIARLTDTPALHLLCIVGDAPAQFQTAAEAVPLPDNAEAVLEEILPEQGDAPAQQAQKTHAEQPRPKTFAFDHDAPPARFIWKVGPDGTFSEISPNLAAVVGPNSADIVGRRFSDVANVFGFDTDGSIAALLLERDTWSGKRLLWPVEGTRLRVPVELAALPVYSRDREFLGFRGFGIVRPAEAEADPEEIGLALAGGIPQNRKPRKEPAETARMVGEDDVLALSEEVANDDQPAAVLPKPPLDITPTPGRRDSDKVISLLNSCAQEKVAADQAKFLKEKERATRPEGGLTKTERNAFREIAERLRKQGLANTRAESETPVSETSSIEPVEPTPPVKTRSEPIQPDETALLANLPVPVIIHSGDAIHYVNQALLDITGYESLDDIRSAGGVDVLFNSESDDGETRQSMLLRHADGSEEPVDAHLNAIAWRGGRALMLSLMPVTAADLPAPAELPAANDEEKQALEAHVEELKTILDTATDGVVLIDPEGRIRSMNHSASALFGYERDEAEGKFFSMLFAIESQRAAMDYLHGLSGNGVLSVLNDGREVIGREAKGGFIPLFMTIGKLPHTRGFCAVLRDITQWKRTEEELTNARKEAERASNQKTEFLARISHEIRTPLNAIIGFSELMADEKFGPIGNDRYRDYLRDINRSGNHVLALVNDLLDISKIEAGALDMQFEAVSLNDAIGEAIALMQPQANRERVIIRSSFQSNLPDIVADSRSIKQVALNLLSNAVRFTAPGGQVIVSTSYELNGDVVMRVRDTGIGMSKSEVEQALKPFRQINALERRKAESAKDWRNEGTGLGLPLTKAMVEANRAQFAIDSNPGQGTVVEIVFPPTRVLAD</sequence>
<feature type="chain" id="PRO_0000361900" description="Cell-division control histidine kinase PdhS">
    <location>
        <begin position="1"/>
        <end position="1035"/>
    </location>
</feature>
<feature type="domain" description="PAS" evidence="3">
    <location>
        <begin position="659"/>
        <end position="730"/>
    </location>
</feature>
<feature type="domain" description="Histidine kinase" evidence="2">
    <location>
        <begin position="802"/>
        <end position="1031"/>
    </location>
</feature>
<feature type="region of interest" description="Important for polar localization" evidence="1">
    <location>
        <begin position="1"/>
        <end position="613"/>
    </location>
</feature>
<feature type="region of interest" description="Disordered" evidence="4">
    <location>
        <begin position="500"/>
        <end position="533"/>
    </location>
</feature>
<feature type="region of interest" description="Interaction with DivK" evidence="1">
    <location>
        <begin position="614"/>
        <end position="1035"/>
    </location>
</feature>
<feature type="modified residue" description="Phosphohistidine; by autocatalysis" evidence="2">
    <location>
        <position position="805"/>
    </location>
</feature>